<proteinExistence type="inferred from homology"/>
<organism>
    <name type="scientific">Vibrio campbellii (strain ATCC BAA-1116)</name>
    <dbReference type="NCBI Taxonomy" id="2902295"/>
    <lineage>
        <taxon>Bacteria</taxon>
        <taxon>Pseudomonadati</taxon>
        <taxon>Pseudomonadota</taxon>
        <taxon>Gammaproteobacteria</taxon>
        <taxon>Vibrionales</taxon>
        <taxon>Vibrionaceae</taxon>
        <taxon>Vibrio</taxon>
    </lineage>
</organism>
<keyword id="KW-0066">ATP synthesis</keyword>
<keyword id="KW-0997">Cell inner membrane</keyword>
<keyword id="KW-1003">Cell membrane</keyword>
<keyword id="KW-0138">CF(0)</keyword>
<keyword id="KW-0375">Hydrogen ion transport</keyword>
<keyword id="KW-0406">Ion transport</keyword>
<keyword id="KW-0472">Membrane</keyword>
<keyword id="KW-0812">Transmembrane</keyword>
<keyword id="KW-1133">Transmembrane helix</keyword>
<keyword id="KW-0813">Transport</keyword>
<comment type="function">
    <text evidence="1">F(1)F(0) ATP synthase produces ATP from ADP in the presence of a proton or sodium gradient. F-type ATPases consist of two structural domains, F(1) containing the extramembraneous catalytic core and F(0) containing the membrane proton channel, linked together by a central stalk and a peripheral stalk. During catalysis, ATP synthesis in the catalytic domain of F(1) is coupled via a rotary mechanism of the central stalk subunits to proton translocation.</text>
</comment>
<comment type="function">
    <text evidence="1">Component of the F(0) channel, it forms part of the peripheral stalk, linking F(1) to F(0).</text>
</comment>
<comment type="subunit">
    <text evidence="1">F-type ATPases have 2 components, F(1) - the catalytic core - and F(0) - the membrane proton channel. F(1) has five subunits: alpha(3), beta(3), gamma(1), delta(1), epsilon(1). F(0) has three main subunits: a(1), b(2) and c(10-14). The alpha and beta chains form an alternating ring which encloses part of the gamma chain. F(1) is attached to F(0) by a central stalk formed by the gamma and epsilon chains, while a peripheral stalk is formed by the delta and b chains.</text>
</comment>
<comment type="subcellular location">
    <subcellularLocation>
        <location evidence="1">Cell inner membrane</location>
        <topology evidence="1">Single-pass membrane protein</topology>
    </subcellularLocation>
</comment>
<comment type="similarity">
    <text evidence="1">Belongs to the ATPase B chain family.</text>
</comment>
<feature type="chain" id="PRO_0000368859" description="ATP synthase subunit b 1">
    <location>
        <begin position="1"/>
        <end position="156"/>
    </location>
</feature>
<feature type="transmembrane region" description="Helical" evidence="1">
    <location>
        <begin position="7"/>
        <end position="29"/>
    </location>
</feature>
<sequence length="156" mass="17564">MNINATLLGQAISFALFVWFCMKYVWPPLMQAIEERQKKIADGLQAAERAAKDLDLAQANASDQMKEAKRTATEIIDQANKRKSQIIDEAREEAQAERQKILAQAEAELEAERNRARDELRKQVATLAVAGAEKILERTIDKDAQKDILDNITAKL</sequence>
<gene>
    <name evidence="1" type="primary">atpF1</name>
    <name type="ordered locus">VIBHAR_00426</name>
</gene>
<protein>
    <recommendedName>
        <fullName evidence="1">ATP synthase subunit b 1</fullName>
    </recommendedName>
    <alternativeName>
        <fullName evidence="1">ATP synthase F(0) sector subunit b 1</fullName>
    </alternativeName>
    <alternativeName>
        <fullName evidence="1">ATPase subunit I 1</fullName>
    </alternativeName>
    <alternativeName>
        <fullName evidence="1">F-type ATPase subunit b 1</fullName>
        <shortName evidence="1">F-ATPase subunit b 1</shortName>
    </alternativeName>
</protein>
<evidence type="ECO:0000255" key="1">
    <source>
        <dbReference type="HAMAP-Rule" id="MF_01398"/>
    </source>
</evidence>
<name>ATPF1_VIBC1</name>
<reference key="1">
    <citation type="submission" date="2007-08" db="EMBL/GenBank/DDBJ databases">
        <authorList>
            <consortium name="The Vibrio harveyi Genome Sequencing Project"/>
            <person name="Bassler B."/>
            <person name="Clifton S.W."/>
            <person name="Fulton L."/>
            <person name="Delehaunty K."/>
            <person name="Fronick C."/>
            <person name="Harrison M."/>
            <person name="Markivic C."/>
            <person name="Fulton R."/>
            <person name="Tin-Wollam A.-M."/>
            <person name="Shah N."/>
            <person name="Pepin K."/>
            <person name="Nash W."/>
            <person name="Thiruvilangam P."/>
            <person name="Bhonagiri V."/>
            <person name="Waters C."/>
            <person name="Tu K.C."/>
            <person name="Irgon J."/>
            <person name="Wilson R.K."/>
        </authorList>
    </citation>
    <scope>NUCLEOTIDE SEQUENCE [LARGE SCALE GENOMIC DNA]</scope>
    <source>
        <strain>ATCC BAA-1116 / BB120</strain>
    </source>
</reference>
<accession>A7N0Y5</accession>
<dbReference type="EMBL" id="CP000789">
    <property type="protein sequence ID" value="ABU69441.1"/>
    <property type="molecule type" value="Genomic_DNA"/>
</dbReference>
<dbReference type="SMR" id="A7N0Y5"/>
<dbReference type="KEGG" id="vha:VIBHAR_00426"/>
<dbReference type="PATRIC" id="fig|338187.25.peg.2165"/>
<dbReference type="Proteomes" id="UP000008152">
    <property type="component" value="Chromosome I"/>
</dbReference>
<dbReference type="GO" id="GO:0005886">
    <property type="term" value="C:plasma membrane"/>
    <property type="evidence" value="ECO:0007669"/>
    <property type="project" value="UniProtKB-SubCell"/>
</dbReference>
<dbReference type="GO" id="GO:0045259">
    <property type="term" value="C:proton-transporting ATP synthase complex"/>
    <property type="evidence" value="ECO:0007669"/>
    <property type="project" value="UniProtKB-KW"/>
</dbReference>
<dbReference type="GO" id="GO:0046933">
    <property type="term" value="F:proton-transporting ATP synthase activity, rotational mechanism"/>
    <property type="evidence" value="ECO:0007669"/>
    <property type="project" value="UniProtKB-UniRule"/>
</dbReference>
<dbReference type="GO" id="GO:0046961">
    <property type="term" value="F:proton-transporting ATPase activity, rotational mechanism"/>
    <property type="evidence" value="ECO:0007669"/>
    <property type="project" value="TreeGrafter"/>
</dbReference>
<dbReference type="CDD" id="cd06503">
    <property type="entry name" value="ATP-synt_Fo_b"/>
    <property type="match status" value="1"/>
</dbReference>
<dbReference type="FunFam" id="1.20.5.620:FF:000001">
    <property type="entry name" value="ATP synthase subunit b"/>
    <property type="match status" value="1"/>
</dbReference>
<dbReference type="Gene3D" id="6.10.250.1580">
    <property type="match status" value="1"/>
</dbReference>
<dbReference type="HAMAP" id="MF_01398">
    <property type="entry name" value="ATP_synth_b_bprime"/>
    <property type="match status" value="1"/>
</dbReference>
<dbReference type="InterPro" id="IPR028987">
    <property type="entry name" value="ATP_synth_B-like_membr_sf"/>
</dbReference>
<dbReference type="InterPro" id="IPR002146">
    <property type="entry name" value="ATP_synth_b/b'su_bac/chlpt"/>
</dbReference>
<dbReference type="InterPro" id="IPR005864">
    <property type="entry name" value="ATP_synth_F0_bsu_bac"/>
</dbReference>
<dbReference type="InterPro" id="IPR050059">
    <property type="entry name" value="ATP_synthase_B_chain"/>
</dbReference>
<dbReference type="NCBIfam" id="TIGR01144">
    <property type="entry name" value="ATP_synt_b"/>
    <property type="match status" value="1"/>
</dbReference>
<dbReference type="NCBIfam" id="NF004411">
    <property type="entry name" value="PRK05759.1-2"/>
    <property type="match status" value="1"/>
</dbReference>
<dbReference type="NCBIfam" id="NF004413">
    <property type="entry name" value="PRK05759.1-4"/>
    <property type="match status" value="1"/>
</dbReference>
<dbReference type="PANTHER" id="PTHR33445:SF1">
    <property type="entry name" value="ATP SYNTHASE SUBUNIT B"/>
    <property type="match status" value="1"/>
</dbReference>
<dbReference type="PANTHER" id="PTHR33445">
    <property type="entry name" value="ATP SYNTHASE SUBUNIT B', CHLOROPLASTIC"/>
    <property type="match status" value="1"/>
</dbReference>
<dbReference type="Pfam" id="PF00430">
    <property type="entry name" value="ATP-synt_B"/>
    <property type="match status" value="1"/>
</dbReference>
<dbReference type="SUPFAM" id="SSF81573">
    <property type="entry name" value="F1F0 ATP synthase subunit B, membrane domain"/>
    <property type="match status" value="1"/>
</dbReference>